<comment type="function">
    <text evidence="1">Involved in mRNA degradation. Catalyzes the phosphorolysis of single-stranded polyribonucleotides processively in the 3'- to 5'-direction.</text>
</comment>
<comment type="catalytic activity">
    <reaction evidence="1">
        <text>RNA(n+1) + phosphate = RNA(n) + a ribonucleoside 5'-diphosphate</text>
        <dbReference type="Rhea" id="RHEA:22096"/>
        <dbReference type="Rhea" id="RHEA-COMP:14527"/>
        <dbReference type="Rhea" id="RHEA-COMP:17342"/>
        <dbReference type="ChEBI" id="CHEBI:43474"/>
        <dbReference type="ChEBI" id="CHEBI:57930"/>
        <dbReference type="ChEBI" id="CHEBI:140395"/>
        <dbReference type="EC" id="2.7.7.8"/>
    </reaction>
</comment>
<comment type="cofactor">
    <cofactor evidence="1">
        <name>Mg(2+)</name>
        <dbReference type="ChEBI" id="CHEBI:18420"/>
    </cofactor>
</comment>
<comment type="subcellular location">
    <subcellularLocation>
        <location evidence="1">Cytoplasm</location>
    </subcellularLocation>
</comment>
<comment type="similarity">
    <text evidence="1">Belongs to the polyribonucleotide nucleotidyltransferase family.</text>
</comment>
<dbReference type="EC" id="2.7.7.8" evidence="1"/>
<dbReference type="EMBL" id="CP001068">
    <property type="protein sequence ID" value="ACD27353.1"/>
    <property type="molecule type" value="Genomic_DNA"/>
</dbReference>
<dbReference type="SMR" id="B2U7R6"/>
<dbReference type="STRING" id="402626.Rpic_2219"/>
<dbReference type="KEGG" id="rpi:Rpic_2219"/>
<dbReference type="PATRIC" id="fig|402626.5.peg.3366"/>
<dbReference type="eggNOG" id="COG1185">
    <property type="taxonomic scope" value="Bacteria"/>
</dbReference>
<dbReference type="HOGENOM" id="CLU_004217_2_2_4"/>
<dbReference type="GO" id="GO:0005829">
    <property type="term" value="C:cytosol"/>
    <property type="evidence" value="ECO:0007669"/>
    <property type="project" value="TreeGrafter"/>
</dbReference>
<dbReference type="GO" id="GO:0000175">
    <property type="term" value="F:3'-5'-RNA exonuclease activity"/>
    <property type="evidence" value="ECO:0007669"/>
    <property type="project" value="TreeGrafter"/>
</dbReference>
<dbReference type="GO" id="GO:0000287">
    <property type="term" value="F:magnesium ion binding"/>
    <property type="evidence" value="ECO:0007669"/>
    <property type="project" value="UniProtKB-UniRule"/>
</dbReference>
<dbReference type="GO" id="GO:0004654">
    <property type="term" value="F:polyribonucleotide nucleotidyltransferase activity"/>
    <property type="evidence" value="ECO:0007669"/>
    <property type="project" value="UniProtKB-UniRule"/>
</dbReference>
<dbReference type="GO" id="GO:0003723">
    <property type="term" value="F:RNA binding"/>
    <property type="evidence" value="ECO:0007669"/>
    <property type="project" value="UniProtKB-UniRule"/>
</dbReference>
<dbReference type="GO" id="GO:0006402">
    <property type="term" value="P:mRNA catabolic process"/>
    <property type="evidence" value="ECO:0007669"/>
    <property type="project" value="UniProtKB-UniRule"/>
</dbReference>
<dbReference type="GO" id="GO:0006396">
    <property type="term" value="P:RNA processing"/>
    <property type="evidence" value="ECO:0007669"/>
    <property type="project" value="InterPro"/>
</dbReference>
<dbReference type="CDD" id="cd02393">
    <property type="entry name" value="KH-I_PNPase"/>
    <property type="match status" value="1"/>
</dbReference>
<dbReference type="CDD" id="cd11363">
    <property type="entry name" value="RNase_PH_PNPase_1"/>
    <property type="match status" value="1"/>
</dbReference>
<dbReference type="CDD" id="cd11364">
    <property type="entry name" value="RNase_PH_PNPase_2"/>
    <property type="match status" value="1"/>
</dbReference>
<dbReference type="CDD" id="cd04472">
    <property type="entry name" value="S1_PNPase"/>
    <property type="match status" value="1"/>
</dbReference>
<dbReference type="FunFam" id="3.30.1370.10:FF:000001">
    <property type="entry name" value="Polyribonucleotide nucleotidyltransferase"/>
    <property type="match status" value="1"/>
</dbReference>
<dbReference type="FunFam" id="3.30.230.70:FF:000001">
    <property type="entry name" value="Polyribonucleotide nucleotidyltransferase"/>
    <property type="match status" value="1"/>
</dbReference>
<dbReference type="FunFam" id="3.30.230.70:FF:000002">
    <property type="entry name" value="Polyribonucleotide nucleotidyltransferase"/>
    <property type="match status" value="1"/>
</dbReference>
<dbReference type="FunFam" id="2.40.50.140:FF:000189">
    <property type="entry name" value="Polyribonucleotide nucleotidyltransferase, putative"/>
    <property type="match status" value="1"/>
</dbReference>
<dbReference type="Gene3D" id="3.30.230.70">
    <property type="entry name" value="GHMP Kinase, N-terminal domain"/>
    <property type="match status" value="2"/>
</dbReference>
<dbReference type="Gene3D" id="3.30.1370.10">
    <property type="entry name" value="K Homology domain, type 1"/>
    <property type="match status" value="1"/>
</dbReference>
<dbReference type="Gene3D" id="2.40.50.140">
    <property type="entry name" value="Nucleic acid-binding proteins"/>
    <property type="match status" value="1"/>
</dbReference>
<dbReference type="HAMAP" id="MF_01595">
    <property type="entry name" value="PNPase"/>
    <property type="match status" value="1"/>
</dbReference>
<dbReference type="InterPro" id="IPR001247">
    <property type="entry name" value="ExoRNase_PH_dom1"/>
</dbReference>
<dbReference type="InterPro" id="IPR015847">
    <property type="entry name" value="ExoRNase_PH_dom2"/>
</dbReference>
<dbReference type="InterPro" id="IPR036345">
    <property type="entry name" value="ExoRNase_PH_dom2_sf"/>
</dbReference>
<dbReference type="InterPro" id="IPR004087">
    <property type="entry name" value="KH_dom"/>
</dbReference>
<dbReference type="InterPro" id="IPR004088">
    <property type="entry name" value="KH_dom_type_1"/>
</dbReference>
<dbReference type="InterPro" id="IPR036612">
    <property type="entry name" value="KH_dom_type_1_sf"/>
</dbReference>
<dbReference type="InterPro" id="IPR012340">
    <property type="entry name" value="NA-bd_OB-fold"/>
</dbReference>
<dbReference type="InterPro" id="IPR012162">
    <property type="entry name" value="PNPase"/>
</dbReference>
<dbReference type="InterPro" id="IPR027408">
    <property type="entry name" value="PNPase/RNase_PH_dom_sf"/>
</dbReference>
<dbReference type="InterPro" id="IPR015848">
    <property type="entry name" value="PNPase_PH_RNA-bd_bac/org-type"/>
</dbReference>
<dbReference type="InterPro" id="IPR036456">
    <property type="entry name" value="PNPase_PH_RNA-bd_sf"/>
</dbReference>
<dbReference type="InterPro" id="IPR020568">
    <property type="entry name" value="Ribosomal_Su5_D2-typ_SF"/>
</dbReference>
<dbReference type="InterPro" id="IPR003029">
    <property type="entry name" value="S1_domain"/>
</dbReference>
<dbReference type="NCBIfam" id="TIGR03591">
    <property type="entry name" value="polynuc_phos"/>
    <property type="match status" value="1"/>
</dbReference>
<dbReference type="NCBIfam" id="NF008805">
    <property type="entry name" value="PRK11824.1"/>
    <property type="match status" value="1"/>
</dbReference>
<dbReference type="PANTHER" id="PTHR11252">
    <property type="entry name" value="POLYRIBONUCLEOTIDE NUCLEOTIDYLTRANSFERASE"/>
    <property type="match status" value="1"/>
</dbReference>
<dbReference type="PANTHER" id="PTHR11252:SF0">
    <property type="entry name" value="POLYRIBONUCLEOTIDE NUCLEOTIDYLTRANSFERASE 1, MITOCHONDRIAL"/>
    <property type="match status" value="1"/>
</dbReference>
<dbReference type="Pfam" id="PF00013">
    <property type="entry name" value="KH_1"/>
    <property type="match status" value="1"/>
</dbReference>
<dbReference type="Pfam" id="PF03726">
    <property type="entry name" value="PNPase"/>
    <property type="match status" value="1"/>
</dbReference>
<dbReference type="Pfam" id="PF01138">
    <property type="entry name" value="RNase_PH"/>
    <property type="match status" value="2"/>
</dbReference>
<dbReference type="Pfam" id="PF03725">
    <property type="entry name" value="RNase_PH_C"/>
    <property type="match status" value="2"/>
</dbReference>
<dbReference type="Pfam" id="PF00575">
    <property type="entry name" value="S1"/>
    <property type="match status" value="1"/>
</dbReference>
<dbReference type="PIRSF" id="PIRSF005499">
    <property type="entry name" value="PNPase"/>
    <property type="match status" value="1"/>
</dbReference>
<dbReference type="SMART" id="SM00322">
    <property type="entry name" value="KH"/>
    <property type="match status" value="1"/>
</dbReference>
<dbReference type="SMART" id="SM00316">
    <property type="entry name" value="S1"/>
    <property type="match status" value="1"/>
</dbReference>
<dbReference type="SUPFAM" id="SSF54791">
    <property type="entry name" value="Eukaryotic type KH-domain (KH-domain type I)"/>
    <property type="match status" value="1"/>
</dbReference>
<dbReference type="SUPFAM" id="SSF50249">
    <property type="entry name" value="Nucleic acid-binding proteins"/>
    <property type="match status" value="1"/>
</dbReference>
<dbReference type="SUPFAM" id="SSF46915">
    <property type="entry name" value="Polynucleotide phosphorylase/guanosine pentaphosphate synthase (PNPase/GPSI), domain 3"/>
    <property type="match status" value="1"/>
</dbReference>
<dbReference type="SUPFAM" id="SSF55666">
    <property type="entry name" value="Ribonuclease PH domain 2-like"/>
    <property type="match status" value="2"/>
</dbReference>
<dbReference type="SUPFAM" id="SSF54211">
    <property type="entry name" value="Ribosomal protein S5 domain 2-like"/>
    <property type="match status" value="2"/>
</dbReference>
<dbReference type="PROSITE" id="PS50084">
    <property type="entry name" value="KH_TYPE_1"/>
    <property type="match status" value="1"/>
</dbReference>
<dbReference type="PROSITE" id="PS50126">
    <property type="entry name" value="S1"/>
    <property type="match status" value="1"/>
</dbReference>
<feature type="chain" id="PRO_1000147948" description="Polyribonucleotide nucleotidyltransferase">
    <location>
        <begin position="1"/>
        <end position="724"/>
    </location>
</feature>
<feature type="domain" description="KH" evidence="1">
    <location>
        <begin position="555"/>
        <end position="614"/>
    </location>
</feature>
<feature type="domain" description="S1 motif" evidence="1">
    <location>
        <begin position="624"/>
        <end position="692"/>
    </location>
</feature>
<feature type="region of interest" description="Disordered" evidence="2">
    <location>
        <begin position="697"/>
        <end position="724"/>
    </location>
</feature>
<feature type="compositionally biased region" description="Low complexity" evidence="2">
    <location>
        <begin position="701"/>
        <end position="724"/>
    </location>
</feature>
<feature type="binding site" evidence="1">
    <location>
        <position position="488"/>
    </location>
    <ligand>
        <name>Mg(2+)</name>
        <dbReference type="ChEBI" id="CHEBI:18420"/>
    </ligand>
</feature>
<feature type="binding site" evidence="1">
    <location>
        <position position="494"/>
    </location>
    <ligand>
        <name>Mg(2+)</name>
        <dbReference type="ChEBI" id="CHEBI:18420"/>
    </ligand>
</feature>
<sequence>MTMFNKVVKEFQWGGHKVRMETGEIARQASGAVLLDMDDTVVLATVVGAKNPKPGQDFFPLTVDYLEKTYAAGKIPGGFFKREGRPSENETLTSRLIDRPLRPLFPEGFYNEVQVVIHVLSINPEVPADIPALVAASAALAVSGLPFNGPVGAARVGYKDGQYLLNPNRAQLAHSDLDLVVAGTERAVLMVESEAQQLSEEIMLGAVVYGHEQMQIAINAIHDLVRDGGKPEWDWQAAPKNEALVAKVSELGLADLQAAYQLRQKSARSQKLKEVYKSVAAKLAEAGVEADGVEVDNILFELESKIVRGQILNGEPRIDGRDTRTVRPIEIRSSVLPRAHGSSLFTRGETQALVVAALGTKSDEQIIDALQGEYRDRFMLHYNMPPFATGETGRVGSPKRREVGHGRLAKRALIPVLPPADEFGYTIRLVSEITESNGSSSMASVCGGSLALMDAGVPIKAHVAGVAMGLILEDNKFAVLTDILGDEDHLGDMDFKVAGTDAGITALQMDIKVQGITKEIMQVALAQAKEGRLHILGKMQAAMGGARTELSEHAPRMITVKINPEKIRDVIGKGGSTIQALTKETGCTIDIGEDGTITIASTSSEGMAEAKRRIEGITAEAEVGKIYNGTVLKLLDFGAIVNILPGKDGLLHISEIANERVNQVSDYVKEGQAVRVKLLSTDEKGRMRLSIKAAKAEEGDVPVAAPQAPGAGDAASQQQQQQQQ</sequence>
<accession>B2U7R6</accession>
<name>PNP_RALPJ</name>
<organism>
    <name type="scientific">Ralstonia pickettii (strain 12J)</name>
    <dbReference type="NCBI Taxonomy" id="402626"/>
    <lineage>
        <taxon>Bacteria</taxon>
        <taxon>Pseudomonadati</taxon>
        <taxon>Pseudomonadota</taxon>
        <taxon>Betaproteobacteria</taxon>
        <taxon>Burkholderiales</taxon>
        <taxon>Burkholderiaceae</taxon>
        <taxon>Ralstonia</taxon>
    </lineage>
</organism>
<reference key="1">
    <citation type="submission" date="2008-05" db="EMBL/GenBank/DDBJ databases">
        <title>Complete sequence of chromosome 1 of Ralstonia pickettii 12J.</title>
        <authorList>
            <person name="Lucas S."/>
            <person name="Copeland A."/>
            <person name="Lapidus A."/>
            <person name="Glavina del Rio T."/>
            <person name="Dalin E."/>
            <person name="Tice H."/>
            <person name="Bruce D."/>
            <person name="Goodwin L."/>
            <person name="Pitluck S."/>
            <person name="Meincke L."/>
            <person name="Brettin T."/>
            <person name="Detter J.C."/>
            <person name="Han C."/>
            <person name="Kuske C.R."/>
            <person name="Schmutz J."/>
            <person name="Larimer F."/>
            <person name="Land M."/>
            <person name="Hauser L."/>
            <person name="Kyrpides N."/>
            <person name="Mikhailova N."/>
            <person name="Marsh T."/>
            <person name="Richardson P."/>
        </authorList>
    </citation>
    <scope>NUCLEOTIDE SEQUENCE [LARGE SCALE GENOMIC DNA]</scope>
    <source>
        <strain>12J</strain>
    </source>
</reference>
<proteinExistence type="inferred from homology"/>
<keyword id="KW-0963">Cytoplasm</keyword>
<keyword id="KW-0460">Magnesium</keyword>
<keyword id="KW-0479">Metal-binding</keyword>
<keyword id="KW-0548">Nucleotidyltransferase</keyword>
<keyword id="KW-0694">RNA-binding</keyword>
<keyword id="KW-0808">Transferase</keyword>
<protein>
    <recommendedName>
        <fullName evidence="1">Polyribonucleotide nucleotidyltransferase</fullName>
        <ecNumber evidence="1">2.7.7.8</ecNumber>
    </recommendedName>
    <alternativeName>
        <fullName evidence="1">Polynucleotide phosphorylase</fullName>
        <shortName evidence="1">PNPase</shortName>
    </alternativeName>
</protein>
<gene>
    <name evidence="1" type="primary">pnp</name>
    <name type="ordered locus">Rpic_2219</name>
</gene>
<evidence type="ECO:0000255" key="1">
    <source>
        <dbReference type="HAMAP-Rule" id="MF_01595"/>
    </source>
</evidence>
<evidence type="ECO:0000256" key="2">
    <source>
        <dbReference type="SAM" id="MobiDB-lite"/>
    </source>
</evidence>